<evidence type="ECO:0000255" key="1">
    <source>
        <dbReference type="HAMAP-Rule" id="MF_03156"/>
    </source>
</evidence>
<evidence type="ECO:0000269" key="2">
    <source>
    </source>
</evidence>
<evidence type="ECO:0000269" key="3">
    <source>
    </source>
</evidence>
<evidence type="ECO:0000269" key="4">
    <source>
    </source>
</evidence>
<evidence type="ECO:0000305" key="5"/>
<accession>Q07152</accession>
<accession>Q26455</accession>
<accession>Q8SXM5</accession>
<accession>Q9W2R8</accession>
<reference key="1">
    <citation type="book" date="1992" name="Proceedings of the 35th meeting of the Canadian Federation of Biological Societies">
        <title>Drosophila inosine monophosphate dehydrogenase is encoded at the raspberry locus.</title>
        <authorList>
            <person name="Nash D."/>
            <person name="Hu S."/>
        </authorList>
    </citation>
    <scope>NUCLEOTIDE SEQUENCE</scope>
    <source>
        <strain>Oregon-R</strain>
        <tissue>Embryo</tissue>
    </source>
</reference>
<reference key="2">
    <citation type="journal article" date="1994" name="Genome">
        <title>The raspberry locus of Drosophila melanogaster includes an inosine monophosphate dehydrogenase like coding sequence.</title>
        <authorList>
            <person name="Nash D."/>
            <person name="Hu S."/>
            <person name="Leonard N.J."/>
            <person name="Tiong S.Y."/>
            <person name="Fillips D."/>
        </authorList>
    </citation>
    <scope>NUCLEOTIDE SEQUENCE [GENOMIC DNA]</scope>
    <scope>FUNCTION</scope>
    <source>
        <strain>Oregon-R</strain>
        <tissue>Embryo</tissue>
    </source>
</reference>
<reference key="3">
    <citation type="journal article" date="1994" name="Biochim. Biophys. Acta">
        <title>Cloning and sequence analysis of a Drosophila melanogaster cDNA encoding IMP dehydrogenase.</title>
        <authorList>
            <person name="Sifri C.D."/>
            <person name="Wilson K."/>
            <person name="Smolik S."/>
            <person name="Forte M.A."/>
            <person name="Ullman B."/>
        </authorList>
    </citation>
    <scope>NUCLEOTIDE SEQUENCE [MRNA]</scope>
    <source>
        <strain>Canton-S</strain>
    </source>
</reference>
<reference key="4">
    <citation type="journal article" date="1995" name="Mol. Gen. Genet.">
        <title>The raspberry locus encodes Drosophila inosine monophosphate dehydrogenase.</title>
        <authorList>
            <person name="Slee R."/>
            <person name="Bownes M."/>
        </authorList>
    </citation>
    <scope>NUCLEOTIDE SEQUENCE [MRNA]</scope>
    <scope>FUNCTION</scope>
    <scope>TISSUE SPECIFICITY</scope>
    <scope>DEVELOPMENTAL STAGE</scope>
</reference>
<reference key="5">
    <citation type="journal article" date="2000" name="Science">
        <title>The genome sequence of Drosophila melanogaster.</title>
        <authorList>
            <person name="Adams M.D."/>
            <person name="Celniker S.E."/>
            <person name="Holt R.A."/>
            <person name="Evans C.A."/>
            <person name="Gocayne J.D."/>
            <person name="Amanatides P.G."/>
            <person name="Scherer S.E."/>
            <person name="Li P.W."/>
            <person name="Hoskins R.A."/>
            <person name="Galle R.F."/>
            <person name="George R.A."/>
            <person name="Lewis S.E."/>
            <person name="Richards S."/>
            <person name="Ashburner M."/>
            <person name="Henderson S.N."/>
            <person name="Sutton G.G."/>
            <person name="Wortman J.R."/>
            <person name="Yandell M.D."/>
            <person name="Zhang Q."/>
            <person name="Chen L.X."/>
            <person name="Brandon R.C."/>
            <person name="Rogers Y.-H.C."/>
            <person name="Blazej R.G."/>
            <person name="Champe M."/>
            <person name="Pfeiffer B.D."/>
            <person name="Wan K.H."/>
            <person name="Doyle C."/>
            <person name="Baxter E.G."/>
            <person name="Helt G."/>
            <person name="Nelson C.R."/>
            <person name="Miklos G.L.G."/>
            <person name="Abril J.F."/>
            <person name="Agbayani A."/>
            <person name="An H.-J."/>
            <person name="Andrews-Pfannkoch C."/>
            <person name="Baldwin D."/>
            <person name="Ballew R.M."/>
            <person name="Basu A."/>
            <person name="Baxendale J."/>
            <person name="Bayraktaroglu L."/>
            <person name="Beasley E.M."/>
            <person name="Beeson K.Y."/>
            <person name="Benos P.V."/>
            <person name="Berman B.P."/>
            <person name="Bhandari D."/>
            <person name="Bolshakov S."/>
            <person name="Borkova D."/>
            <person name="Botchan M.R."/>
            <person name="Bouck J."/>
            <person name="Brokstein P."/>
            <person name="Brottier P."/>
            <person name="Burtis K.C."/>
            <person name="Busam D.A."/>
            <person name="Butler H."/>
            <person name="Cadieu E."/>
            <person name="Center A."/>
            <person name="Chandra I."/>
            <person name="Cherry J.M."/>
            <person name="Cawley S."/>
            <person name="Dahlke C."/>
            <person name="Davenport L.B."/>
            <person name="Davies P."/>
            <person name="de Pablos B."/>
            <person name="Delcher A."/>
            <person name="Deng Z."/>
            <person name="Mays A.D."/>
            <person name="Dew I."/>
            <person name="Dietz S.M."/>
            <person name="Dodson K."/>
            <person name="Doup L.E."/>
            <person name="Downes M."/>
            <person name="Dugan-Rocha S."/>
            <person name="Dunkov B.C."/>
            <person name="Dunn P."/>
            <person name="Durbin K.J."/>
            <person name="Evangelista C.C."/>
            <person name="Ferraz C."/>
            <person name="Ferriera S."/>
            <person name="Fleischmann W."/>
            <person name="Fosler C."/>
            <person name="Gabrielian A.E."/>
            <person name="Garg N.S."/>
            <person name="Gelbart W.M."/>
            <person name="Glasser K."/>
            <person name="Glodek A."/>
            <person name="Gong F."/>
            <person name="Gorrell J.H."/>
            <person name="Gu Z."/>
            <person name="Guan P."/>
            <person name="Harris M."/>
            <person name="Harris N.L."/>
            <person name="Harvey D.A."/>
            <person name="Heiman T.J."/>
            <person name="Hernandez J.R."/>
            <person name="Houck J."/>
            <person name="Hostin D."/>
            <person name="Houston K.A."/>
            <person name="Howland T.J."/>
            <person name="Wei M.-H."/>
            <person name="Ibegwam C."/>
            <person name="Jalali M."/>
            <person name="Kalush F."/>
            <person name="Karpen G.H."/>
            <person name="Ke Z."/>
            <person name="Kennison J.A."/>
            <person name="Ketchum K.A."/>
            <person name="Kimmel B.E."/>
            <person name="Kodira C.D."/>
            <person name="Kraft C.L."/>
            <person name="Kravitz S."/>
            <person name="Kulp D."/>
            <person name="Lai Z."/>
            <person name="Lasko P."/>
            <person name="Lei Y."/>
            <person name="Levitsky A.A."/>
            <person name="Li J.H."/>
            <person name="Li Z."/>
            <person name="Liang Y."/>
            <person name="Lin X."/>
            <person name="Liu X."/>
            <person name="Mattei B."/>
            <person name="McIntosh T.C."/>
            <person name="McLeod M.P."/>
            <person name="McPherson D."/>
            <person name="Merkulov G."/>
            <person name="Milshina N.V."/>
            <person name="Mobarry C."/>
            <person name="Morris J."/>
            <person name="Moshrefi A."/>
            <person name="Mount S.M."/>
            <person name="Moy M."/>
            <person name="Murphy B."/>
            <person name="Murphy L."/>
            <person name="Muzny D.M."/>
            <person name="Nelson D.L."/>
            <person name="Nelson D.R."/>
            <person name="Nelson K.A."/>
            <person name="Nixon K."/>
            <person name="Nusskern D.R."/>
            <person name="Pacleb J.M."/>
            <person name="Palazzolo M."/>
            <person name="Pittman G.S."/>
            <person name="Pan S."/>
            <person name="Pollard J."/>
            <person name="Puri V."/>
            <person name="Reese M.G."/>
            <person name="Reinert K."/>
            <person name="Remington K."/>
            <person name="Saunders R.D.C."/>
            <person name="Scheeler F."/>
            <person name="Shen H."/>
            <person name="Shue B.C."/>
            <person name="Siden-Kiamos I."/>
            <person name="Simpson M."/>
            <person name="Skupski M.P."/>
            <person name="Smith T.J."/>
            <person name="Spier E."/>
            <person name="Spradling A.C."/>
            <person name="Stapleton M."/>
            <person name="Strong R."/>
            <person name="Sun E."/>
            <person name="Svirskas R."/>
            <person name="Tector C."/>
            <person name="Turner R."/>
            <person name="Venter E."/>
            <person name="Wang A.H."/>
            <person name="Wang X."/>
            <person name="Wang Z.-Y."/>
            <person name="Wassarman D.A."/>
            <person name="Weinstock G.M."/>
            <person name="Weissenbach J."/>
            <person name="Williams S.M."/>
            <person name="Woodage T."/>
            <person name="Worley K.C."/>
            <person name="Wu D."/>
            <person name="Yang S."/>
            <person name="Yao Q.A."/>
            <person name="Ye J."/>
            <person name="Yeh R.-F."/>
            <person name="Zaveri J.S."/>
            <person name="Zhan M."/>
            <person name="Zhang G."/>
            <person name="Zhao Q."/>
            <person name="Zheng L."/>
            <person name="Zheng X.H."/>
            <person name="Zhong F.N."/>
            <person name="Zhong W."/>
            <person name="Zhou X."/>
            <person name="Zhu S.C."/>
            <person name="Zhu X."/>
            <person name="Smith H.O."/>
            <person name="Gibbs R.A."/>
            <person name="Myers E.W."/>
            <person name="Rubin G.M."/>
            <person name="Venter J.C."/>
        </authorList>
    </citation>
    <scope>NUCLEOTIDE SEQUENCE [LARGE SCALE GENOMIC DNA]</scope>
    <source>
        <strain>Berkeley</strain>
    </source>
</reference>
<reference key="6">
    <citation type="journal article" date="2002" name="Genome Biol.">
        <title>Annotation of the Drosophila melanogaster euchromatic genome: a systematic review.</title>
        <authorList>
            <person name="Misra S."/>
            <person name="Crosby M.A."/>
            <person name="Mungall C.J."/>
            <person name="Matthews B.B."/>
            <person name="Campbell K.S."/>
            <person name="Hradecky P."/>
            <person name="Huang Y."/>
            <person name="Kaminker J.S."/>
            <person name="Millburn G.H."/>
            <person name="Prochnik S.E."/>
            <person name="Smith C.D."/>
            <person name="Tupy J.L."/>
            <person name="Whitfield E.J."/>
            <person name="Bayraktaroglu L."/>
            <person name="Berman B.P."/>
            <person name="Bettencourt B.R."/>
            <person name="Celniker S.E."/>
            <person name="de Grey A.D.N.J."/>
            <person name="Drysdale R.A."/>
            <person name="Harris N.L."/>
            <person name="Richter J."/>
            <person name="Russo S."/>
            <person name="Schroeder A.J."/>
            <person name="Shu S.Q."/>
            <person name="Stapleton M."/>
            <person name="Yamada C."/>
            <person name="Ashburner M."/>
            <person name="Gelbart W.M."/>
            <person name="Rubin G.M."/>
            <person name="Lewis S.E."/>
        </authorList>
    </citation>
    <scope>GENOME REANNOTATION</scope>
    <source>
        <strain>Berkeley</strain>
    </source>
</reference>
<reference key="7">
    <citation type="journal article" date="2002" name="Genome Biol.">
        <title>A Drosophila full-length cDNA resource.</title>
        <authorList>
            <person name="Stapleton M."/>
            <person name="Carlson J.W."/>
            <person name="Brokstein P."/>
            <person name="Yu C."/>
            <person name="Champe M."/>
            <person name="George R.A."/>
            <person name="Guarin H."/>
            <person name="Kronmiller B."/>
            <person name="Pacleb J.M."/>
            <person name="Park S."/>
            <person name="Wan K.H."/>
            <person name="Rubin G.M."/>
            <person name="Celniker S.E."/>
        </authorList>
    </citation>
    <scope>NUCLEOTIDE SEQUENCE [LARGE SCALE MRNA]</scope>
    <source>
        <strain>Berkeley</strain>
        <tissue>Embryo</tissue>
    </source>
</reference>
<reference key="8">
    <citation type="journal article" date="2008" name="J. Proteome Res.">
        <title>Phosphoproteome analysis of Drosophila melanogaster embryos.</title>
        <authorList>
            <person name="Zhai B."/>
            <person name="Villen J."/>
            <person name="Beausoleil S.A."/>
            <person name="Mintseris J."/>
            <person name="Gygi S.P."/>
        </authorList>
    </citation>
    <scope>PHOSPHORYLATION [LARGE SCALE ANALYSIS] AT SER-28</scope>
    <scope>IDENTIFICATION BY MASS SPECTROMETRY</scope>
    <source>
        <tissue>Embryo</tissue>
    </source>
</reference>
<organism>
    <name type="scientific">Drosophila melanogaster</name>
    <name type="common">Fruit fly</name>
    <dbReference type="NCBI Taxonomy" id="7227"/>
    <lineage>
        <taxon>Eukaryota</taxon>
        <taxon>Metazoa</taxon>
        <taxon>Ecdysozoa</taxon>
        <taxon>Arthropoda</taxon>
        <taxon>Hexapoda</taxon>
        <taxon>Insecta</taxon>
        <taxon>Pterygota</taxon>
        <taxon>Neoptera</taxon>
        <taxon>Endopterygota</taxon>
        <taxon>Diptera</taxon>
        <taxon>Brachycera</taxon>
        <taxon>Muscomorpha</taxon>
        <taxon>Ephydroidea</taxon>
        <taxon>Drosophilidae</taxon>
        <taxon>Drosophila</taxon>
        <taxon>Sophophora</taxon>
    </lineage>
</organism>
<feature type="chain" id="PRO_0000093678" description="Inosine-5'-monophosphate dehydrogenase">
    <location>
        <begin position="1"/>
        <end position="537"/>
    </location>
</feature>
<feature type="domain" description="CBS 1" evidence="1">
    <location>
        <begin position="136"/>
        <end position="195"/>
    </location>
</feature>
<feature type="domain" description="CBS 2" evidence="1">
    <location>
        <begin position="200"/>
        <end position="256"/>
    </location>
</feature>
<feature type="active site" description="Thioimidate intermediate" evidence="1">
    <location>
        <position position="350"/>
    </location>
</feature>
<feature type="binding site" evidence="1">
    <location>
        <begin position="293"/>
        <end position="295"/>
    </location>
    <ligand>
        <name>NAD(+)</name>
        <dbReference type="ChEBI" id="CHEBI:57540"/>
    </ligand>
</feature>
<feature type="binding site" evidence="1">
    <location>
        <begin position="343"/>
        <end position="345"/>
    </location>
    <ligand>
        <name>NAD(+)</name>
        <dbReference type="ChEBI" id="CHEBI:57540"/>
    </ligand>
</feature>
<feature type="binding site" description="in other chain" evidence="1">
    <location>
        <position position="345"/>
    </location>
    <ligand>
        <name>K(+)</name>
        <dbReference type="ChEBI" id="CHEBI:29103"/>
        <note>ligand shared between two tetrameric partners</note>
    </ligand>
</feature>
<feature type="binding site" description="in other chain" evidence="1">
    <location>
        <position position="347"/>
    </location>
    <ligand>
        <name>K(+)</name>
        <dbReference type="ChEBI" id="CHEBI:29103"/>
        <note>ligand shared between two tetrameric partners</note>
    </ligand>
</feature>
<feature type="binding site" evidence="1">
    <location>
        <position position="348"/>
    </location>
    <ligand>
        <name>IMP</name>
        <dbReference type="ChEBI" id="CHEBI:58053"/>
    </ligand>
</feature>
<feature type="binding site" description="in other chain" evidence="1">
    <location>
        <position position="350"/>
    </location>
    <ligand>
        <name>K(+)</name>
        <dbReference type="ChEBI" id="CHEBI:29103"/>
        <note>ligand shared between two tetrameric partners</note>
    </ligand>
</feature>
<feature type="binding site" evidence="1">
    <location>
        <begin position="383"/>
        <end position="385"/>
    </location>
    <ligand>
        <name>IMP</name>
        <dbReference type="ChEBI" id="CHEBI:58053"/>
    </ligand>
</feature>
<feature type="binding site" evidence="1">
    <location>
        <begin position="406"/>
        <end position="407"/>
    </location>
    <ligand>
        <name>IMP</name>
        <dbReference type="ChEBI" id="CHEBI:58053"/>
    </ligand>
</feature>
<feature type="binding site" evidence="1">
    <location>
        <begin position="430"/>
        <end position="434"/>
    </location>
    <ligand>
        <name>IMP</name>
        <dbReference type="ChEBI" id="CHEBI:58053"/>
    </ligand>
</feature>
<feature type="binding site" evidence="1">
    <location>
        <position position="464"/>
    </location>
    <ligand>
        <name>IMP</name>
        <dbReference type="ChEBI" id="CHEBI:58053"/>
    </ligand>
</feature>
<feature type="binding site" evidence="1">
    <location>
        <position position="523"/>
    </location>
    <ligand>
        <name>K(+)</name>
        <dbReference type="ChEBI" id="CHEBI:29103"/>
        <note>ligand shared between two tetrameric partners</note>
    </ligand>
</feature>
<feature type="binding site" evidence="1">
    <location>
        <position position="524"/>
    </location>
    <ligand>
        <name>K(+)</name>
        <dbReference type="ChEBI" id="CHEBI:29103"/>
        <note>ligand shared between two tetrameric partners</note>
    </ligand>
</feature>
<feature type="modified residue" description="Phosphoserine" evidence="2">
    <location>
        <position position="28"/>
    </location>
</feature>
<feature type="sequence conflict" description="In Ref. 4; AAB35628." evidence="5" ref="4">
    <original>D</original>
    <variation>V</variation>
    <location>
        <position position="38"/>
    </location>
</feature>
<feature type="sequence conflict" description="In Ref. 4; AAB35628." evidence="5" ref="4">
    <original>T</original>
    <variation>P</variation>
    <location>
        <position position="53"/>
    </location>
</feature>
<feature type="sequence conflict" description="In Ref. 4; AAB35628." evidence="5" ref="4">
    <original>EMAI</original>
    <variation>RCH</variation>
    <location>
        <begin position="99"/>
        <end position="102"/>
    </location>
</feature>
<feature type="sequence conflict" description="In Ref. 4; AAB35628." evidence="5" ref="4">
    <original>D</original>
    <variation>A</variation>
    <location>
        <position position="184"/>
    </location>
</feature>
<feature type="sequence conflict" description="In Ref. 4; AAB35628." evidence="5" ref="4">
    <original>V</original>
    <variation>S</variation>
    <location>
        <position position="194"/>
    </location>
</feature>
<feature type="sequence conflict" description="In Ref. 4; AAB35628." evidence="5" ref="4">
    <original>AN</original>
    <variation>EH</variation>
    <location>
        <begin position="216"/>
        <end position="217"/>
    </location>
</feature>
<feature type="sequence conflict" description="In Ref. 4; AAB35628." evidence="5" ref="4">
    <original>GKLP</original>
    <variation>ATA</variation>
    <location>
        <begin position="226"/>
        <end position="229"/>
    </location>
</feature>
<feature type="sequence conflict" description="In Ref. 4; AAB35628." evidence="5" ref="4">
    <original>T</original>
    <variation>A</variation>
    <location>
        <position position="244"/>
    </location>
</feature>
<feature type="sequence conflict" description="In Ref. 4; AAB35628." evidence="5" ref="4">
    <original>KQ</original>
    <variation>TR</variation>
    <location>
        <begin position="261"/>
        <end position="262"/>
    </location>
</feature>
<feature type="sequence conflict" description="In Ref. 4; AAB35628." evidence="5" ref="4">
    <original>VG</original>
    <variation>CP</variation>
    <location>
        <begin position="265"/>
        <end position="266"/>
    </location>
</feature>
<feature type="sequence conflict" description="In Ref. 4; AAB35628." evidence="5" ref="4">
    <original>AR</original>
    <variation>GCRA</variation>
    <location>
        <begin position="277"/>
        <end position="278"/>
    </location>
</feature>
<feature type="sequence conflict" description="In Ref. 4; AAB35628." evidence="5" ref="4">
    <original>A</original>
    <variation>R</variation>
    <location>
        <position position="284"/>
    </location>
</feature>
<feature type="sequence conflict" description="In Ref. 4; AAB35628." evidence="5" ref="4">
    <original>Y</original>
    <variation>I</variation>
    <location>
        <position position="301"/>
    </location>
</feature>
<feature type="sequence conflict" description="In Ref. 4; AAB35628." evidence="5" ref="4">
    <original>QS</original>
    <variation>HA</variation>
    <location>
        <begin position="387"/>
        <end position="388"/>
    </location>
</feature>
<keyword id="KW-0129">CBS domain</keyword>
<keyword id="KW-0963">Cytoplasm</keyword>
<keyword id="KW-0332">GMP biosynthesis</keyword>
<keyword id="KW-0479">Metal-binding</keyword>
<keyword id="KW-0520">NAD</keyword>
<keyword id="KW-0560">Oxidoreductase</keyword>
<keyword id="KW-0597">Phosphoprotein</keyword>
<keyword id="KW-0630">Potassium</keyword>
<keyword id="KW-0658">Purine biosynthesis</keyword>
<keyword id="KW-1185">Reference proteome</keyword>
<keyword id="KW-0677">Repeat</keyword>
<proteinExistence type="evidence at protein level"/>
<gene>
    <name type="primary">ras</name>
    <name type="ORF">CG1799</name>
</gene>
<dbReference type="EC" id="1.1.1.205" evidence="1"/>
<dbReference type="EMBL" id="L14847">
    <property type="protein sequence ID" value="AAA21831.1"/>
    <property type="molecule type" value="Genomic_DNA"/>
</dbReference>
<dbReference type="EMBL" id="L22608">
    <property type="protein sequence ID" value="AAA16839.1"/>
    <property type="molecule type" value="mRNA"/>
</dbReference>
<dbReference type="EMBL" id="S80430">
    <property type="protein sequence ID" value="AAB35628.1"/>
    <property type="molecule type" value="mRNA"/>
</dbReference>
<dbReference type="EMBL" id="AE014298">
    <property type="protein sequence ID" value="AAF46621.3"/>
    <property type="molecule type" value="Genomic_DNA"/>
</dbReference>
<dbReference type="EMBL" id="AE014298">
    <property type="protein sequence ID" value="AAF46622.1"/>
    <property type="molecule type" value="Genomic_DNA"/>
</dbReference>
<dbReference type="EMBL" id="AY089553">
    <property type="protein sequence ID" value="AAL90291.1"/>
    <property type="status" value="ALT_FRAME"/>
    <property type="molecule type" value="mRNA"/>
</dbReference>
<dbReference type="PIR" id="S41064">
    <property type="entry name" value="S41064"/>
</dbReference>
<dbReference type="PIR" id="S59508">
    <property type="entry name" value="S59508"/>
</dbReference>
<dbReference type="RefSeq" id="NP_001259427.1">
    <property type="nucleotide sequence ID" value="NM_001272498.2"/>
</dbReference>
<dbReference type="RefSeq" id="NP_524646.5">
    <property type="nucleotide sequence ID" value="NM_079907.7"/>
</dbReference>
<dbReference type="RefSeq" id="NP_727441.1">
    <property type="nucleotide sequence ID" value="NM_167240.3"/>
</dbReference>
<dbReference type="RefSeq" id="NP_727442.1">
    <property type="nucleotide sequence ID" value="NM_167241.3"/>
</dbReference>
<dbReference type="SMR" id="Q07152"/>
<dbReference type="BioGRID" id="68684">
    <property type="interactions" value="15"/>
</dbReference>
<dbReference type="DIP" id="DIP-21552N"/>
<dbReference type="FunCoup" id="Q07152">
    <property type="interactions" value="946"/>
</dbReference>
<dbReference type="IntAct" id="Q07152">
    <property type="interactions" value="6"/>
</dbReference>
<dbReference type="STRING" id="7227.FBpp0423162"/>
<dbReference type="iPTMnet" id="Q07152"/>
<dbReference type="PaxDb" id="7227-FBpp0304573"/>
<dbReference type="DNASU" id="43873"/>
<dbReference type="EnsemblMetazoa" id="FBtr0071494">
    <property type="protein sequence ID" value="FBpp0071423"/>
    <property type="gene ID" value="FBgn0003204"/>
</dbReference>
<dbReference type="EnsemblMetazoa" id="FBtr0071495">
    <property type="protein sequence ID" value="FBpp0071424"/>
    <property type="gene ID" value="FBgn0003204"/>
</dbReference>
<dbReference type="EnsemblMetazoa" id="FBtr0332294">
    <property type="protein sequence ID" value="FBpp0304573"/>
    <property type="gene ID" value="FBgn0003204"/>
</dbReference>
<dbReference type="EnsemblMetazoa" id="FBtr0343043">
    <property type="protein sequence ID" value="FBpp0309791"/>
    <property type="gene ID" value="FBgn0003204"/>
</dbReference>
<dbReference type="GeneID" id="43873"/>
<dbReference type="KEGG" id="dme:Dmel_CG1799"/>
<dbReference type="AGR" id="FB:FBgn0003204"/>
<dbReference type="CTD" id="19412"/>
<dbReference type="FlyBase" id="FBgn0003204">
    <property type="gene designation" value="ras"/>
</dbReference>
<dbReference type="VEuPathDB" id="VectorBase:FBgn0003204"/>
<dbReference type="eggNOG" id="KOG2550">
    <property type="taxonomic scope" value="Eukaryota"/>
</dbReference>
<dbReference type="GeneTree" id="ENSGT00940000154156"/>
<dbReference type="HOGENOM" id="CLU_022552_2_1_1"/>
<dbReference type="InParanoid" id="Q07152"/>
<dbReference type="OMA" id="MGYCGAK"/>
<dbReference type="OrthoDB" id="416622at2759"/>
<dbReference type="PhylomeDB" id="Q07152"/>
<dbReference type="Reactome" id="R-DME-6798695">
    <property type="pathway name" value="Neutrophil degranulation"/>
</dbReference>
<dbReference type="Reactome" id="R-DME-73817">
    <property type="pathway name" value="Purine ribonucleoside monophosphate biosynthesis"/>
</dbReference>
<dbReference type="Reactome" id="R-DME-9748787">
    <property type="pathway name" value="Azathioprine ADME"/>
</dbReference>
<dbReference type="UniPathway" id="UPA00601">
    <property type="reaction ID" value="UER00295"/>
</dbReference>
<dbReference type="BioGRID-ORCS" id="43873">
    <property type="hits" value="1 hit in 3 CRISPR screens"/>
</dbReference>
<dbReference type="GenomeRNAi" id="43873"/>
<dbReference type="PRO" id="PR:Q07152"/>
<dbReference type="Proteomes" id="UP000000803">
    <property type="component" value="Chromosome X"/>
</dbReference>
<dbReference type="Bgee" id="FBgn0003204">
    <property type="expression patterns" value="Expressed in eye disc (Drosophila) and 202 other cell types or tissues"/>
</dbReference>
<dbReference type="ExpressionAtlas" id="Q07152">
    <property type="expression patterns" value="baseline and differential"/>
</dbReference>
<dbReference type="GO" id="GO:0005737">
    <property type="term" value="C:cytoplasm"/>
    <property type="evidence" value="ECO:0000318"/>
    <property type="project" value="GO_Central"/>
</dbReference>
<dbReference type="GO" id="GO:0003938">
    <property type="term" value="F:IMP dehydrogenase activity"/>
    <property type="evidence" value="ECO:0000250"/>
    <property type="project" value="FlyBase"/>
</dbReference>
<dbReference type="GO" id="GO:0046872">
    <property type="term" value="F:metal ion binding"/>
    <property type="evidence" value="ECO:0007669"/>
    <property type="project" value="UniProtKB-UniRule"/>
</dbReference>
<dbReference type="GO" id="GO:0000166">
    <property type="term" value="F:nucleotide binding"/>
    <property type="evidence" value="ECO:0007669"/>
    <property type="project" value="UniProtKB-UniRule"/>
</dbReference>
<dbReference type="GO" id="GO:0007411">
    <property type="term" value="P:axon guidance"/>
    <property type="evidence" value="ECO:0000315"/>
    <property type="project" value="FlyBase"/>
</dbReference>
<dbReference type="GO" id="GO:0006177">
    <property type="term" value="P:GMP biosynthetic process"/>
    <property type="evidence" value="ECO:0007669"/>
    <property type="project" value="UniProtKB-UniRule"/>
</dbReference>
<dbReference type="GO" id="GO:0006183">
    <property type="term" value="P:GTP biosynthetic process"/>
    <property type="evidence" value="ECO:0000318"/>
    <property type="project" value="GO_Central"/>
</dbReference>
<dbReference type="GO" id="GO:0006164">
    <property type="term" value="P:purine nucleotide biosynthetic process"/>
    <property type="evidence" value="ECO:0000250"/>
    <property type="project" value="FlyBase"/>
</dbReference>
<dbReference type="CDD" id="cd04601">
    <property type="entry name" value="CBS_pair_IMPDH"/>
    <property type="match status" value="1"/>
</dbReference>
<dbReference type="CDD" id="cd00381">
    <property type="entry name" value="IMPDH"/>
    <property type="match status" value="1"/>
</dbReference>
<dbReference type="FunFam" id="3.20.20.70:FF:000007">
    <property type="entry name" value="Chromosome 19 SCAF14664, whole genome shotgun sequence"/>
    <property type="match status" value="1"/>
</dbReference>
<dbReference type="Gene3D" id="3.20.20.70">
    <property type="entry name" value="Aldolase class I"/>
    <property type="match status" value="1"/>
</dbReference>
<dbReference type="HAMAP" id="MF_01964">
    <property type="entry name" value="IMPDH"/>
    <property type="match status" value="1"/>
</dbReference>
<dbReference type="InterPro" id="IPR013785">
    <property type="entry name" value="Aldolase_TIM"/>
</dbReference>
<dbReference type="InterPro" id="IPR000644">
    <property type="entry name" value="CBS_dom"/>
</dbReference>
<dbReference type="InterPro" id="IPR046342">
    <property type="entry name" value="CBS_dom_sf"/>
</dbReference>
<dbReference type="InterPro" id="IPR005990">
    <property type="entry name" value="IMP_DH"/>
</dbReference>
<dbReference type="InterPro" id="IPR015875">
    <property type="entry name" value="IMP_DH/GMP_Rdtase_CS"/>
</dbReference>
<dbReference type="InterPro" id="IPR001093">
    <property type="entry name" value="IMP_DH_GMPRt"/>
</dbReference>
<dbReference type="NCBIfam" id="TIGR01302">
    <property type="entry name" value="IMP_dehydrog"/>
    <property type="match status" value="1"/>
</dbReference>
<dbReference type="PANTHER" id="PTHR11911:SF111">
    <property type="entry name" value="INOSINE-5'-MONOPHOSPHATE DEHYDROGENASE"/>
    <property type="match status" value="1"/>
</dbReference>
<dbReference type="PANTHER" id="PTHR11911">
    <property type="entry name" value="INOSINE-5-MONOPHOSPHATE DEHYDROGENASE RELATED"/>
    <property type="match status" value="1"/>
</dbReference>
<dbReference type="Pfam" id="PF00571">
    <property type="entry name" value="CBS"/>
    <property type="match status" value="2"/>
</dbReference>
<dbReference type="Pfam" id="PF00478">
    <property type="entry name" value="IMPDH"/>
    <property type="match status" value="1"/>
</dbReference>
<dbReference type="PIRSF" id="PIRSF000130">
    <property type="entry name" value="IMPDH"/>
    <property type="match status" value="1"/>
</dbReference>
<dbReference type="SMART" id="SM00116">
    <property type="entry name" value="CBS"/>
    <property type="match status" value="2"/>
</dbReference>
<dbReference type="SMART" id="SM01240">
    <property type="entry name" value="IMPDH"/>
    <property type="match status" value="1"/>
</dbReference>
<dbReference type="SUPFAM" id="SSF54631">
    <property type="entry name" value="CBS-domain pair"/>
    <property type="match status" value="1"/>
</dbReference>
<dbReference type="SUPFAM" id="SSF51412">
    <property type="entry name" value="Inosine monophosphate dehydrogenase (IMPDH)"/>
    <property type="match status" value="1"/>
</dbReference>
<dbReference type="PROSITE" id="PS51371">
    <property type="entry name" value="CBS"/>
    <property type="match status" value="2"/>
</dbReference>
<dbReference type="PROSITE" id="PS00487">
    <property type="entry name" value="IMP_DH_GMP_RED"/>
    <property type="match status" value="1"/>
</dbReference>
<comment type="function">
    <text evidence="1 3 4">Catalyzes the conversion of inosine 5'-phosphate (IMP) to xanthosine 5'-phosphate (XMP), the first committed and rate-limiting step in the de novo synthesis of guanine nucleotides, and therefore plays an important role in the regulation of cell growth.</text>
</comment>
<comment type="catalytic activity">
    <reaction evidence="1">
        <text>IMP + NAD(+) + H2O = XMP + NADH + H(+)</text>
        <dbReference type="Rhea" id="RHEA:11708"/>
        <dbReference type="ChEBI" id="CHEBI:15377"/>
        <dbReference type="ChEBI" id="CHEBI:15378"/>
        <dbReference type="ChEBI" id="CHEBI:57464"/>
        <dbReference type="ChEBI" id="CHEBI:57540"/>
        <dbReference type="ChEBI" id="CHEBI:57945"/>
        <dbReference type="ChEBI" id="CHEBI:58053"/>
        <dbReference type="EC" id="1.1.1.205"/>
    </reaction>
</comment>
<comment type="cofactor">
    <cofactor evidence="1">
        <name>K(+)</name>
        <dbReference type="ChEBI" id="CHEBI:29103"/>
    </cofactor>
</comment>
<comment type="activity regulation">
    <text evidence="1">Mycophenolic acid (MPA) is a non-competitive inhibitor that prevents formation of the closed enzyme conformation by binding to the same site as the amobile flap. In contrast, mizoribine monophosphate (MZP) is a competitive inhibitor that induces the closed conformation. MPA is a potent inhibitor of mammalian IMPDHs but a poor inhibitor of the bacterial enzymes. MZP is a more potent inhibitor of bacterial IMPDH.</text>
</comment>
<comment type="pathway">
    <text evidence="1">Purine metabolism; XMP biosynthesis via de novo pathway; XMP from IMP: step 1/1.</text>
</comment>
<comment type="subunit">
    <text evidence="1">Homotetramer.</text>
</comment>
<comment type="subcellular location">
    <subcellularLocation>
        <location evidence="1">Cytoplasm</location>
    </subcellularLocation>
</comment>
<comment type="tissue specificity">
    <text evidence="3">Enriched in adult ovary and testis.</text>
</comment>
<comment type="developmental stage">
    <text evidence="3">Expressed both maternally and zygotically.</text>
</comment>
<comment type="similarity">
    <text evidence="1">Belongs to the IMPDH/GMPR family.</text>
</comment>
<comment type="sequence caution" evidence="5">
    <conflict type="frameshift">
        <sequence resource="EMBL-CDS" id="AAL90291"/>
    </conflict>
</comment>
<sequence>MESTTKVKVNGFVESTSSSAAPAIQTKSTTGFDAELQDGLSCKELFQNGEGLTYNDFLILPGYIDFTAEEVDLSSPLTKSLTLRAPLVSSPMDTVTESEMAIAMALCGGIGIIHHNCTPEYQALEVHKVKKYKHGFMRDPSVMSPTNTVGDVLEARRKNGFTGYPVTENGKLGGKLLGMVTSRDIDFRENQPEVLLADIMTTELVTAPNGINLPTANAILEKSKKGKLPIVNQAGELVAMIARTDLKKARSYPNASKDSNKQLLVGAAIGTRSEDKARLALLVANGVDVIILDSSQGNSVYQVEMIKYIKETYPELQVIGGNVVTRAQAKNLIDAGVDGLRVGMGSGSICITQEVMACGCPQATAVYQVSTYARQFGVPVIADGGIQSIGHIVKAIALGASAVMMGSLLAGTSEAPGEYFFSDGVRLKKYRGMGSLEAMERGDAKGAAMSRYYHNEMDKMKVAQGVSGSIVDKGSVLRYLPYLECGLQHSCQDIGANSINKLRDMIYNGQLRFMKRTHSAQLEGNVHGLFSYEKRLF</sequence>
<protein>
    <recommendedName>
        <fullName evidence="1">Inosine-5'-monophosphate dehydrogenase</fullName>
        <shortName evidence="1">IMP dehydrogenase</shortName>
        <shortName evidence="1">IMPD</shortName>
        <shortName evidence="1">IMPDH</shortName>
        <ecNumber evidence="1">1.1.1.205</ecNumber>
    </recommendedName>
    <alternativeName>
        <fullName>Protein raspberry</fullName>
    </alternativeName>
</protein>
<name>IMDH_DROME</name>